<keyword id="KW-0238">DNA-binding</keyword>
<keyword id="KW-0489">Methyltransferase</keyword>
<keyword id="KW-1185">Reference proteome</keyword>
<keyword id="KW-0680">Restriction system</keyword>
<keyword id="KW-0949">S-adenosyl-L-methionine</keyword>
<keyword id="KW-0808">Transferase</keyword>
<accession>P68585</accession>
<accession>P05795</accession>
<proteinExistence type="inferred from homology"/>
<feature type="chain" id="PRO_0000087865" description="Putative type II methyltransferase M.BsuMIIP">
    <location>
        <begin position="1"/>
        <end position="443"/>
    </location>
</feature>
<feature type="domain" description="SAM-dependent MTase C5-type" evidence="1">
    <location>
        <begin position="4"/>
        <end position="440"/>
    </location>
</feature>
<feature type="active site" evidence="1 2">
    <location>
        <position position="78"/>
    </location>
</feature>
<comment type="function">
    <text evidence="3 4">A putative methylase, recognizes the double-stranded sequence 5'-GGCC-3', methylates C-?. There is no known cognate restriction enzyme.</text>
</comment>
<comment type="catalytic activity">
    <reaction evidence="2">
        <text>a 2'-deoxycytidine in DNA + S-adenosyl-L-methionine = a 5-methyl-2'-deoxycytidine in DNA + S-adenosyl-L-homocysteine + H(+)</text>
        <dbReference type="Rhea" id="RHEA:13681"/>
        <dbReference type="Rhea" id="RHEA-COMP:11369"/>
        <dbReference type="Rhea" id="RHEA-COMP:11370"/>
        <dbReference type="ChEBI" id="CHEBI:15378"/>
        <dbReference type="ChEBI" id="CHEBI:57856"/>
        <dbReference type="ChEBI" id="CHEBI:59789"/>
        <dbReference type="ChEBI" id="CHEBI:85452"/>
        <dbReference type="ChEBI" id="CHEBI:85454"/>
        <dbReference type="EC" id="2.1.1.37"/>
    </reaction>
</comment>
<comment type="miscellaneous">
    <text evidence="4">Encoded in the SPbeta prophage region.</text>
</comment>
<comment type="similarity">
    <text evidence="1">Belongs to the class I-like SAM-binding methyltransferase superfamily. C5-methyltransferase family.</text>
</comment>
<organism>
    <name type="scientific">Bacillus subtilis (strain 168)</name>
    <dbReference type="NCBI Taxonomy" id="224308"/>
    <lineage>
        <taxon>Bacteria</taxon>
        <taxon>Bacillati</taxon>
        <taxon>Bacillota</taxon>
        <taxon>Bacilli</taxon>
        <taxon>Bacillales</taxon>
        <taxon>Bacillaceae</taxon>
        <taxon>Bacillus</taxon>
    </lineage>
</organism>
<name>MTBP_BACSU</name>
<protein>
    <recommendedName>
        <fullName evidence="3">Putative type II methyltransferase M.BsuMIIP</fullName>
        <shortName evidence="3">M.BsuMIIP</shortName>
        <ecNumber>2.1.1.37</ecNumber>
    </recommendedName>
    <alternativeName>
        <fullName>Cytosine-specific methyltransferase Phi3TI</fullName>
    </alternativeName>
    <alternativeName>
        <fullName>Phi-3T prophage-derived modification methylase Phi3TI</fullName>
        <shortName>M.Phi3TI</shortName>
    </alternativeName>
</protein>
<evidence type="ECO:0000255" key="1">
    <source>
        <dbReference type="PROSITE-ProRule" id="PRU01016"/>
    </source>
</evidence>
<evidence type="ECO:0000255" key="2">
    <source>
        <dbReference type="PROSITE-ProRule" id="PRU10018"/>
    </source>
</evidence>
<evidence type="ECO:0000303" key="3">
    <source>
    </source>
</evidence>
<evidence type="ECO:0000305" key="4"/>
<gene>
    <name type="primary">mtbP</name>
    <name type="ordered locus">BSU20250</name>
</gene>
<reference key="1">
    <citation type="journal article" date="1997" name="Nature">
        <title>The complete genome sequence of the Gram-positive bacterium Bacillus subtilis.</title>
        <authorList>
            <person name="Kunst F."/>
            <person name="Ogasawara N."/>
            <person name="Moszer I."/>
            <person name="Albertini A.M."/>
            <person name="Alloni G."/>
            <person name="Azevedo V."/>
            <person name="Bertero M.G."/>
            <person name="Bessieres P."/>
            <person name="Bolotin A."/>
            <person name="Borchert S."/>
            <person name="Borriss R."/>
            <person name="Boursier L."/>
            <person name="Brans A."/>
            <person name="Braun M."/>
            <person name="Brignell S.C."/>
            <person name="Bron S."/>
            <person name="Brouillet S."/>
            <person name="Bruschi C.V."/>
            <person name="Caldwell B."/>
            <person name="Capuano V."/>
            <person name="Carter N.M."/>
            <person name="Choi S.-K."/>
            <person name="Codani J.-J."/>
            <person name="Connerton I.F."/>
            <person name="Cummings N.J."/>
            <person name="Daniel R.A."/>
            <person name="Denizot F."/>
            <person name="Devine K.M."/>
            <person name="Duesterhoeft A."/>
            <person name="Ehrlich S.D."/>
            <person name="Emmerson P.T."/>
            <person name="Entian K.-D."/>
            <person name="Errington J."/>
            <person name="Fabret C."/>
            <person name="Ferrari E."/>
            <person name="Foulger D."/>
            <person name="Fritz C."/>
            <person name="Fujita M."/>
            <person name="Fujita Y."/>
            <person name="Fuma S."/>
            <person name="Galizzi A."/>
            <person name="Galleron N."/>
            <person name="Ghim S.-Y."/>
            <person name="Glaser P."/>
            <person name="Goffeau A."/>
            <person name="Golightly E.J."/>
            <person name="Grandi G."/>
            <person name="Guiseppi G."/>
            <person name="Guy B.J."/>
            <person name="Haga K."/>
            <person name="Haiech J."/>
            <person name="Harwood C.R."/>
            <person name="Henaut A."/>
            <person name="Hilbert H."/>
            <person name="Holsappel S."/>
            <person name="Hosono S."/>
            <person name="Hullo M.-F."/>
            <person name="Itaya M."/>
            <person name="Jones L.-M."/>
            <person name="Joris B."/>
            <person name="Karamata D."/>
            <person name="Kasahara Y."/>
            <person name="Klaerr-Blanchard M."/>
            <person name="Klein C."/>
            <person name="Kobayashi Y."/>
            <person name="Koetter P."/>
            <person name="Koningstein G."/>
            <person name="Krogh S."/>
            <person name="Kumano M."/>
            <person name="Kurita K."/>
            <person name="Lapidus A."/>
            <person name="Lardinois S."/>
            <person name="Lauber J."/>
            <person name="Lazarevic V."/>
            <person name="Lee S.-M."/>
            <person name="Levine A."/>
            <person name="Liu H."/>
            <person name="Masuda S."/>
            <person name="Mauel C."/>
            <person name="Medigue C."/>
            <person name="Medina N."/>
            <person name="Mellado R.P."/>
            <person name="Mizuno M."/>
            <person name="Moestl D."/>
            <person name="Nakai S."/>
            <person name="Noback M."/>
            <person name="Noone D."/>
            <person name="O'Reilly M."/>
            <person name="Ogawa K."/>
            <person name="Ogiwara A."/>
            <person name="Oudega B."/>
            <person name="Park S.-H."/>
            <person name="Parro V."/>
            <person name="Pohl T.M."/>
            <person name="Portetelle D."/>
            <person name="Porwollik S."/>
            <person name="Prescott A.M."/>
            <person name="Presecan E."/>
            <person name="Pujic P."/>
            <person name="Purnelle B."/>
            <person name="Rapoport G."/>
            <person name="Rey M."/>
            <person name="Reynolds S."/>
            <person name="Rieger M."/>
            <person name="Rivolta C."/>
            <person name="Rocha E."/>
            <person name="Roche B."/>
            <person name="Rose M."/>
            <person name="Sadaie Y."/>
            <person name="Sato T."/>
            <person name="Scanlan E."/>
            <person name="Schleich S."/>
            <person name="Schroeter R."/>
            <person name="Scoffone F."/>
            <person name="Sekiguchi J."/>
            <person name="Sekowska A."/>
            <person name="Seror S.J."/>
            <person name="Serror P."/>
            <person name="Shin B.-S."/>
            <person name="Soldo B."/>
            <person name="Sorokin A."/>
            <person name="Tacconi E."/>
            <person name="Takagi T."/>
            <person name="Takahashi H."/>
            <person name="Takemaru K."/>
            <person name="Takeuchi M."/>
            <person name="Tamakoshi A."/>
            <person name="Tanaka T."/>
            <person name="Terpstra P."/>
            <person name="Tognoni A."/>
            <person name="Tosato V."/>
            <person name="Uchiyama S."/>
            <person name="Vandenbol M."/>
            <person name="Vannier F."/>
            <person name="Vassarotti A."/>
            <person name="Viari A."/>
            <person name="Wambutt R."/>
            <person name="Wedler E."/>
            <person name="Wedler H."/>
            <person name="Weitzenegger T."/>
            <person name="Winters P."/>
            <person name="Wipat A."/>
            <person name="Yamamoto H."/>
            <person name="Yamane K."/>
            <person name="Yasumoto K."/>
            <person name="Yata K."/>
            <person name="Yoshida K."/>
            <person name="Yoshikawa H.-F."/>
            <person name="Zumstein E."/>
            <person name="Yoshikawa H."/>
            <person name="Danchin A."/>
        </authorList>
    </citation>
    <scope>NUCLEOTIDE SEQUENCE [LARGE SCALE GENOMIC DNA]</scope>
    <source>
        <strain>168</strain>
    </source>
</reference>
<reference key="2">
    <citation type="journal article" date="2003" name="Nucleic Acids Res.">
        <title>A nomenclature for restriction enzymes, DNA methyltransferases, homing endonucleases and their genes.</title>
        <authorList>
            <person name="Roberts R.J."/>
            <person name="Belfort M."/>
            <person name="Bestor T."/>
            <person name="Bhagwat A.S."/>
            <person name="Bickle T.A."/>
            <person name="Bitinaite J."/>
            <person name="Blumenthal R.M."/>
            <person name="Degtyarev S.K."/>
            <person name="Dryden D.T."/>
            <person name="Dybvig K."/>
            <person name="Firman K."/>
            <person name="Gromova E.S."/>
            <person name="Gumport R.I."/>
            <person name="Halford S.E."/>
            <person name="Hattman S."/>
            <person name="Heitman J."/>
            <person name="Hornby D.P."/>
            <person name="Janulaitis A."/>
            <person name="Jeltsch A."/>
            <person name="Josephsen J."/>
            <person name="Kiss A."/>
            <person name="Klaenhammer T.R."/>
            <person name="Kobayashi I."/>
            <person name="Kong H."/>
            <person name="Krueger D.H."/>
            <person name="Lacks S."/>
            <person name="Marinus M.G."/>
            <person name="Miyahara M."/>
            <person name="Morgan R.D."/>
            <person name="Murray N.E."/>
            <person name="Nagaraja V."/>
            <person name="Piekarowicz A."/>
            <person name="Pingoud A."/>
            <person name="Raleigh E."/>
            <person name="Rao D.N."/>
            <person name="Reich N."/>
            <person name="Repin V.E."/>
            <person name="Selker E.U."/>
            <person name="Shaw P.C."/>
            <person name="Stein D.C."/>
            <person name="Stoddard B.L."/>
            <person name="Szybalski W."/>
            <person name="Trautner T.A."/>
            <person name="Van Etten J.L."/>
            <person name="Vitor J.M."/>
            <person name="Wilson G.G."/>
            <person name="Xu S.Y."/>
        </authorList>
    </citation>
    <scope>NOMENCLATURE</scope>
</reference>
<dbReference type="EC" id="2.1.1.37"/>
<dbReference type="EMBL" id="AL009126">
    <property type="protein sequence ID" value="CAB13917.1"/>
    <property type="molecule type" value="Genomic_DNA"/>
</dbReference>
<dbReference type="RefSeq" id="NP_389907.1">
    <property type="nucleotide sequence ID" value="NC_000964.3"/>
</dbReference>
<dbReference type="SMR" id="P68585"/>
<dbReference type="FunCoup" id="P68585">
    <property type="interactions" value="131"/>
</dbReference>
<dbReference type="STRING" id="224308.BSU20250"/>
<dbReference type="REBASE" id="3140">
    <property type="entry name" value="M.BsuMIIP"/>
</dbReference>
<dbReference type="PaxDb" id="224308-BSU20250"/>
<dbReference type="EnsemblBacteria" id="CAB13917">
    <property type="protein sequence ID" value="CAB13917"/>
    <property type="gene ID" value="BSU_20250"/>
</dbReference>
<dbReference type="GeneID" id="939532"/>
<dbReference type="KEGG" id="bsu:BSU20250"/>
<dbReference type="PATRIC" id="fig|224308.179.peg.2215"/>
<dbReference type="eggNOG" id="COG0270">
    <property type="taxonomic scope" value="Bacteria"/>
</dbReference>
<dbReference type="InParanoid" id="P68585"/>
<dbReference type="OrthoDB" id="9813719at2"/>
<dbReference type="PhylomeDB" id="P68585"/>
<dbReference type="BioCyc" id="BSUB:BSU20250-MONOMER"/>
<dbReference type="PRO" id="PR:P68585"/>
<dbReference type="Proteomes" id="UP000001570">
    <property type="component" value="Chromosome"/>
</dbReference>
<dbReference type="GO" id="GO:0003886">
    <property type="term" value="F:DNA (cytosine-5-)-methyltransferase activity"/>
    <property type="evidence" value="ECO:0007669"/>
    <property type="project" value="UniProtKB-EC"/>
</dbReference>
<dbReference type="GO" id="GO:0003677">
    <property type="term" value="F:DNA binding"/>
    <property type="evidence" value="ECO:0007669"/>
    <property type="project" value="UniProtKB-KW"/>
</dbReference>
<dbReference type="GO" id="GO:0009307">
    <property type="term" value="P:DNA restriction-modification system"/>
    <property type="evidence" value="ECO:0007669"/>
    <property type="project" value="UniProtKB-KW"/>
</dbReference>
<dbReference type="GO" id="GO:0032259">
    <property type="term" value="P:methylation"/>
    <property type="evidence" value="ECO:0007669"/>
    <property type="project" value="UniProtKB-KW"/>
</dbReference>
<dbReference type="CDD" id="cd00315">
    <property type="entry name" value="Cyt_C5_DNA_methylase"/>
    <property type="match status" value="1"/>
</dbReference>
<dbReference type="Gene3D" id="3.90.120.10">
    <property type="entry name" value="DNA Methylase, subunit A, domain 2"/>
    <property type="match status" value="1"/>
</dbReference>
<dbReference type="Gene3D" id="3.40.50.150">
    <property type="entry name" value="Vaccinia Virus protein VP39"/>
    <property type="match status" value="1"/>
</dbReference>
<dbReference type="InterPro" id="IPR050750">
    <property type="entry name" value="C5-MTase"/>
</dbReference>
<dbReference type="InterPro" id="IPR018117">
    <property type="entry name" value="C5_DNA_meth_AS"/>
</dbReference>
<dbReference type="InterPro" id="IPR001525">
    <property type="entry name" value="C5_MeTfrase"/>
</dbReference>
<dbReference type="InterPro" id="IPR031303">
    <property type="entry name" value="C5_meth_CS"/>
</dbReference>
<dbReference type="InterPro" id="IPR029063">
    <property type="entry name" value="SAM-dependent_MTases_sf"/>
</dbReference>
<dbReference type="NCBIfam" id="TIGR00675">
    <property type="entry name" value="dcm"/>
    <property type="match status" value="1"/>
</dbReference>
<dbReference type="PANTHER" id="PTHR46098">
    <property type="entry name" value="TRNA (CYTOSINE(38)-C(5))-METHYLTRANSFERASE"/>
    <property type="match status" value="1"/>
</dbReference>
<dbReference type="PANTHER" id="PTHR46098:SF1">
    <property type="entry name" value="TRNA (CYTOSINE(38)-C(5))-METHYLTRANSFERASE"/>
    <property type="match status" value="1"/>
</dbReference>
<dbReference type="Pfam" id="PF00145">
    <property type="entry name" value="DNA_methylase"/>
    <property type="match status" value="2"/>
</dbReference>
<dbReference type="PRINTS" id="PR00105">
    <property type="entry name" value="C5METTRFRASE"/>
</dbReference>
<dbReference type="SUPFAM" id="SSF53335">
    <property type="entry name" value="S-adenosyl-L-methionine-dependent methyltransferases"/>
    <property type="match status" value="1"/>
</dbReference>
<dbReference type="PROSITE" id="PS00094">
    <property type="entry name" value="C5_MTASE_1"/>
    <property type="match status" value="1"/>
</dbReference>
<dbReference type="PROSITE" id="PS00095">
    <property type="entry name" value="C5_MTASE_2"/>
    <property type="match status" value="1"/>
</dbReference>
<dbReference type="PROSITE" id="PS51679">
    <property type="entry name" value="SAM_MT_C5"/>
    <property type="match status" value="1"/>
</dbReference>
<sequence>MSKLRVMSLFSGIGAFEAALRNIGVDYELIGFSEIDKYAIKSYCAIHNVSETLNVGDISKAKKDNIPYFDLLTSGFPCPTFSVAGGRDGMEYKCSNCSHEHLITYEDYKKGVKCPKCEAVSKAKDERGTLFFETALLAEEKKPKFVILENVKGLINSGNGQVLRIISETMNNIGYRIDLELLNSKFFNVPQNRERVYIIGIREDLVENEQWVVGQKRNDVLSKGKKRLQEINIKSFNFKWPLQDTVTKRLREILEDFVDEKYYLNEEKTKKLVEQLGTAPLQKQEVREPLMVGHVDLKGHDAIKRVYSPEGLSPTLTTMGGGHREPKIAEKQKEVRAVLTPEREEKRQNGRRFKENGEPAFTVNTIDRHGVAIGEYPKYKIRKLSPLECWRLQAFDDEDFEKAFAAGISNSQLYKQAGNSITVSVLESIFQELIHTYVNKESE</sequence>